<accession>C5A096</accession>
<keyword id="KW-0963">Cytoplasm</keyword>
<protein>
    <recommendedName>
        <fullName evidence="1">Regulator of ribonuclease activity A</fullName>
    </recommendedName>
</protein>
<sequence length="161" mass="17360">MKYDTSELCDIYQEDVNVVEPLFSNFGGRASFGGQIITVKCFEDNGLLYDLLEQNGRGRVLVVDGGGSVRRALVDAELARLAVQNEWEGLVIYGAVRQVDDLEELDIGIQAMAAIPVGAAGEGIGESDVRVNFGGVTFFSGDHLYADNTGIILSEDPLDIE</sequence>
<evidence type="ECO:0000255" key="1">
    <source>
        <dbReference type="HAMAP-Rule" id="MF_00471"/>
    </source>
</evidence>
<feature type="chain" id="PRO_1000206349" description="Regulator of ribonuclease activity A">
    <location>
        <begin position="1"/>
        <end position="161"/>
    </location>
</feature>
<comment type="function">
    <text evidence="1">Globally modulates RNA abundance by binding to RNase E (Rne) and regulating its endonucleolytic activity. Can modulate Rne action in a substrate-dependent manner by altering the composition of the degradosome. Modulates RNA-binding and helicase activities of the degradosome.</text>
</comment>
<comment type="subunit">
    <text evidence="1">Homotrimer. Binds to both RNA-binding sites in the C-terminal region of Rne and to RhlB.</text>
</comment>
<comment type="subcellular location">
    <subcellularLocation>
        <location evidence="1">Cytoplasm</location>
    </subcellularLocation>
</comment>
<comment type="similarity">
    <text evidence="1">Belongs to the RraA family.</text>
</comment>
<proteinExistence type="inferred from homology"/>
<organism>
    <name type="scientific">Escherichia coli (strain K12 / MC4100 / BW2952)</name>
    <dbReference type="NCBI Taxonomy" id="595496"/>
    <lineage>
        <taxon>Bacteria</taxon>
        <taxon>Pseudomonadati</taxon>
        <taxon>Pseudomonadota</taxon>
        <taxon>Gammaproteobacteria</taxon>
        <taxon>Enterobacterales</taxon>
        <taxon>Enterobacteriaceae</taxon>
        <taxon>Escherichia</taxon>
    </lineage>
</organism>
<dbReference type="EMBL" id="CP001396">
    <property type="protein sequence ID" value="ACR65465.1"/>
    <property type="molecule type" value="Genomic_DNA"/>
</dbReference>
<dbReference type="RefSeq" id="WP_000872908.1">
    <property type="nucleotide sequence ID" value="NC_012759.1"/>
</dbReference>
<dbReference type="SMR" id="C5A096"/>
<dbReference type="GeneID" id="93777969"/>
<dbReference type="KEGG" id="ebw:BWG_3598"/>
<dbReference type="HOGENOM" id="CLU_072626_4_0_6"/>
<dbReference type="GO" id="GO:0005829">
    <property type="term" value="C:cytosol"/>
    <property type="evidence" value="ECO:0007669"/>
    <property type="project" value="TreeGrafter"/>
</dbReference>
<dbReference type="GO" id="GO:0060698">
    <property type="term" value="F:endoribonuclease inhibitor activity"/>
    <property type="evidence" value="ECO:0007669"/>
    <property type="project" value="UniProtKB-UniRule"/>
</dbReference>
<dbReference type="GO" id="GO:0019899">
    <property type="term" value="F:enzyme binding"/>
    <property type="evidence" value="ECO:0007669"/>
    <property type="project" value="UniProtKB-UniRule"/>
</dbReference>
<dbReference type="GO" id="GO:1902369">
    <property type="term" value="P:negative regulation of RNA catabolic process"/>
    <property type="evidence" value="ECO:0007669"/>
    <property type="project" value="TreeGrafter"/>
</dbReference>
<dbReference type="CDD" id="cd16841">
    <property type="entry name" value="RraA_family"/>
    <property type="match status" value="1"/>
</dbReference>
<dbReference type="FunFam" id="3.50.30.40:FF:000001">
    <property type="entry name" value="Regulator of ribonuclease activity A"/>
    <property type="match status" value="1"/>
</dbReference>
<dbReference type="Gene3D" id="3.50.30.40">
    <property type="entry name" value="Ribonuclease E inhibitor RraA/RraA-like"/>
    <property type="match status" value="1"/>
</dbReference>
<dbReference type="HAMAP" id="MF_00471">
    <property type="entry name" value="RraA"/>
    <property type="match status" value="1"/>
</dbReference>
<dbReference type="InterPro" id="IPR010203">
    <property type="entry name" value="RraA"/>
</dbReference>
<dbReference type="InterPro" id="IPR005493">
    <property type="entry name" value="RraA/RraA-like"/>
</dbReference>
<dbReference type="InterPro" id="IPR036704">
    <property type="entry name" value="RraA/RraA-like_sf"/>
</dbReference>
<dbReference type="InterPro" id="IPR014339">
    <property type="entry name" value="RraA_gpbac"/>
</dbReference>
<dbReference type="NCBIfam" id="TIGR01935">
    <property type="entry name" value="NOT-MenG"/>
    <property type="match status" value="1"/>
</dbReference>
<dbReference type="NCBIfam" id="NF006875">
    <property type="entry name" value="PRK09372.1"/>
    <property type="match status" value="1"/>
</dbReference>
<dbReference type="NCBIfam" id="TIGR02998">
    <property type="entry name" value="RraA_entero"/>
    <property type="match status" value="1"/>
</dbReference>
<dbReference type="PANTHER" id="PTHR33254">
    <property type="entry name" value="4-HYDROXY-4-METHYL-2-OXOGLUTARATE ALDOLASE 3-RELATED"/>
    <property type="match status" value="1"/>
</dbReference>
<dbReference type="PANTHER" id="PTHR33254:SF29">
    <property type="entry name" value="REGULATOR OF RIBONUCLEASE ACTIVITY A"/>
    <property type="match status" value="1"/>
</dbReference>
<dbReference type="Pfam" id="PF03737">
    <property type="entry name" value="RraA-like"/>
    <property type="match status" value="1"/>
</dbReference>
<dbReference type="SUPFAM" id="SSF89562">
    <property type="entry name" value="RraA-like"/>
    <property type="match status" value="1"/>
</dbReference>
<name>RRAA_ECOBW</name>
<reference key="1">
    <citation type="journal article" date="2009" name="J. Bacteriol.">
        <title>Genomic sequencing reveals regulatory mutations and recombinational events in the widely used MC4100 lineage of Escherichia coli K-12.</title>
        <authorList>
            <person name="Ferenci T."/>
            <person name="Zhou Z."/>
            <person name="Betteridge T."/>
            <person name="Ren Y."/>
            <person name="Liu Y."/>
            <person name="Feng L."/>
            <person name="Reeves P.R."/>
            <person name="Wang L."/>
        </authorList>
    </citation>
    <scope>NUCLEOTIDE SEQUENCE [LARGE SCALE GENOMIC DNA]</scope>
    <source>
        <strain>K12 / MC4100 / BW2952</strain>
    </source>
</reference>
<gene>
    <name evidence="1" type="primary">rraA</name>
    <name type="ordered locus">BWG_3598</name>
</gene>